<proteinExistence type="evidence at protein level"/>
<protein>
    <recommendedName>
        <fullName>Hydroxyacylglutathione hydrolase cytoplasmic</fullName>
        <ecNumber evidence="2 4">3.1.2.6</ecNumber>
    </recommendedName>
    <alternativeName>
        <fullName>Glyoxalase II</fullName>
        <shortName>Glx II</shortName>
    </alternativeName>
</protein>
<feature type="chain" id="PRO_0000192347" description="Hydroxyacylglutathione hydrolase cytoplasmic">
    <location>
        <begin position="1"/>
        <end position="258"/>
    </location>
</feature>
<feature type="binding site" evidence="1">
    <location>
        <position position="54"/>
    </location>
    <ligand>
        <name>Zn(2+)</name>
        <dbReference type="ChEBI" id="CHEBI:29105"/>
    </ligand>
</feature>
<feature type="binding site" evidence="1">
    <location>
        <position position="56"/>
    </location>
    <ligand>
        <name>Zn(2+)</name>
        <dbReference type="ChEBI" id="CHEBI:29105"/>
    </ligand>
</feature>
<feature type="binding site" evidence="1">
    <location>
        <position position="58"/>
    </location>
    <ligand>
        <name>Fe cation</name>
        <dbReference type="ChEBI" id="CHEBI:24875"/>
    </ligand>
</feature>
<feature type="binding site" evidence="1">
    <location>
        <position position="59"/>
    </location>
    <ligand>
        <name>Fe cation</name>
        <dbReference type="ChEBI" id="CHEBI:24875"/>
    </ligand>
</feature>
<feature type="binding site" evidence="1">
    <location>
        <position position="112"/>
    </location>
    <ligand>
        <name>Zn(2+)</name>
        <dbReference type="ChEBI" id="CHEBI:29105"/>
    </ligand>
</feature>
<feature type="binding site" evidence="1">
    <location>
        <position position="135"/>
    </location>
    <ligand>
        <name>Fe cation</name>
        <dbReference type="ChEBI" id="CHEBI:24875"/>
    </ligand>
</feature>
<feature type="binding site" evidence="1">
    <location>
        <position position="135"/>
    </location>
    <ligand>
        <name>Zn(2+)</name>
        <dbReference type="ChEBI" id="CHEBI:29105"/>
    </ligand>
</feature>
<feature type="binding site" evidence="1">
    <location>
        <begin position="144"/>
        <end position="146"/>
    </location>
    <ligand>
        <name>substrate</name>
    </ligand>
</feature>
<feature type="binding site" evidence="1">
    <location>
        <begin position="174"/>
        <end position="176"/>
    </location>
    <ligand>
        <name>substrate</name>
    </ligand>
</feature>
<feature type="binding site" evidence="1">
    <location>
        <position position="174"/>
    </location>
    <ligand>
        <name>Fe cation</name>
        <dbReference type="ChEBI" id="CHEBI:24875"/>
    </ligand>
</feature>
<feature type="mutagenesis site" description="Binds normal amount of metal, but reduced enzyme activity." evidence="2">
    <original>H</original>
    <variation>N</variation>
    <location>
        <position position="54"/>
    </location>
</feature>
<feature type="mutagenesis site" description="Binds normal amount of metal, but reduced enzyme activity." evidence="2">
    <original>D</original>
    <variation>C</variation>
    <location>
        <position position="58"/>
    </location>
</feature>
<feature type="mutagenesis site" description="Increases the metal content and the enzyme activity." evidence="2">
    <original>C</original>
    <variation>A</variation>
    <location>
        <position position="142"/>
    </location>
</feature>
<feature type="mutagenesis site" description="Binds normal amount of metal, but reduced enzyme activity." evidence="2">
    <original>K</original>
    <variation>A</variation>
    <location>
        <position position="144"/>
    </location>
</feature>
<feature type="mutagenesis site" description="70% reduction in enzyme activity." evidence="2">
    <original>N</original>
    <variation>A</variation>
    <location>
        <position position="180"/>
    </location>
</feature>
<feature type="mutagenesis site" description="Decreases metal binding and enzyme stability." evidence="2">
    <original>R</original>
    <variation>A</variation>
    <location>
        <position position="227"/>
    </location>
</feature>
<feature type="mutagenesis site" description="Decreases the substrate affinity." evidence="2">
    <original>R</original>
    <variation>W</variation>
    <location>
        <position position="250"/>
    </location>
</feature>
<feature type="sequence conflict" description="In Ref. 1; AAC49867." evidence="6" ref="1">
    <original>S</original>
    <variation>T</variation>
    <location>
        <position position="14"/>
    </location>
</feature>
<feature type="sequence conflict" description="In Ref. 1; AAC49867." evidence="6" ref="1">
    <original>GCTDAVDNG</original>
    <variation>VALMRLIC</variation>
    <location>
        <begin position="85"/>
        <end position="93"/>
    </location>
</feature>
<feature type="sequence conflict" description="In Ref. 1; AAC49867." evidence="6" ref="1">
    <original>LGQDI</original>
    <variation>WSGY</variation>
    <location>
        <begin position="98"/>
        <end position="102"/>
    </location>
</feature>
<feature type="sequence conflict" description="In Ref. 1; AAC49867." evidence="6" ref="1">
    <original>N</original>
    <variation>T</variation>
    <location>
        <position position="122"/>
    </location>
</feature>
<accession>O24496</accession>
<accession>O04844</accession>
<gene>
    <name type="primary">GLX2-2</name>
    <name type="synonym">GLY2</name>
    <name type="ordered locus">At3g10850</name>
    <name type="ORF">T7M13.7</name>
</gene>
<sequence>MKIFHVPCLQDNYSYLIIDESTGDAAVVDPVDPEKVIASAEKHQAKIKFVLTTHHHWDHAGGNEKIKQLVPDIKVYGGSLDKVKGCTDAVDNGDKLTLGQDINILALHTPCHTKGHISYYVNGKEGENPAVFTGDTLFVAGCGKFFEGTAEQMYQSLCVTLAALPKPTQVYCGHEYTVKNLEFALTVEPNNGKIQQKLAWARQQRQADLPTIPSTLEEELETNPFMRVDKPEIQEKLGCKSPIDTMREVRNKKDQWRG</sequence>
<comment type="function">
    <text evidence="2 3 4">Thiolesterase that catalyzes the hydrolysis of S-D-lactoyl-glutathione to form glutathione and D-lactic acid.</text>
</comment>
<comment type="catalytic activity">
    <reaction evidence="2 4">
        <text>an S-(2-hydroxyacyl)glutathione + H2O = a 2-hydroxy carboxylate + glutathione + H(+)</text>
        <dbReference type="Rhea" id="RHEA:21864"/>
        <dbReference type="ChEBI" id="CHEBI:15377"/>
        <dbReference type="ChEBI" id="CHEBI:15378"/>
        <dbReference type="ChEBI" id="CHEBI:57925"/>
        <dbReference type="ChEBI" id="CHEBI:58896"/>
        <dbReference type="ChEBI" id="CHEBI:71261"/>
        <dbReference type="EC" id="3.1.2.6"/>
    </reaction>
</comment>
<comment type="cofactor">
    <cofactor evidence="4">
        <name>Fe(2+)</name>
        <dbReference type="ChEBI" id="CHEBI:29033"/>
    </cofactor>
    <cofactor evidence="4">
        <name>Zn(2+)</name>
        <dbReference type="ChEBI" id="CHEBI:29105"/>
    </cofactor>
    <cofactor evidence="4">
        <name>Fe(3+)</name>
        <dbReference type="ChEBI" id="CHEBI:29034"/>
    </cofactor>
    <text evidence="4">Binds 1 Fe(2+) or Fe(3+) and 1 Zn(2+) ion per subunit, catalysis is optimal with 1 Fe and 1 Zn. Electron spin resonance indicates the presence of a mixture of protein molecules that contain either Fe(2+) or Fe(3+) and Zn(2+). Mn(2+) is not a cofactor (PubMed:19834746).</text>
</comment>
<comment type="biophysicochemical properties">
    <kinetics>
        <KM evidence="3">220 uM for S-D-lactoylglutathion</KM>
    </kinetics>
</comment>
<comment type="pathway">
    <text>Secondary metabolite metabolism; methylglyoxal degradation; (R)-lactate from methylglyoxal: step 2/2.</text>
</comment>
<comment type="subunit">
    <text evidence="6">Homodimer.</text>
</comment>
<comment type="subcellular location">
    <subcellularLocation>
        <location>Cytoplasm</location>
    </subcellularLocation>
</comment>
<comment type="tissue specificity">
    <text evidence="5">Mainly expressed in flowers and flower buds. Also detected in roots and leaves.</text>
</comment>
<comment type="similarity">
    <text evidence="6">Belongs to the metallo-beta-lactamase superfamily. Glyoxalase II family.</text>
</comment>
<evidence type="ECO:0000250" key="1">
    <source>
        <dbReference type="UniProtKB" id="Q16775"/>
    </source>
</evidence>
<evidence type="ECO:0000269" key="2">
    <source>
    </source>
</evidence>
<evidence type="ECO:0000269" key="3">
    <source>
    </source>
</evidence>
<evidence type="ECO:0000269" key="4">
    <source>
    </source>
</evidence>
<evidence type="ECO:0000269" key="5">
    <source>
    </source>
</evidence>
<evidence type="ECO:0000305" key="6"/>
<reference key="1">
    <citation type="journal article" date="1997" name="Plant Mol. Biol.">
        <title>Molecular characterization of glyoxalase II from Arabidopsis thaliana.</title>
        <authorList>
            <person name="Maiti M.K."/>
            <person name="Krishnasamy S."/>
            <person name="Owen H.A."/>
            <person name="Makaroff C.A."/>
        </authorList>
    </citation>
    <scope>NUCLEOTIDE SEQUENCE [MRNA]</scope>
    <scope>TISSUE SPECIFICITY</scope>
    <source>
        <strain>cv. Wassilewskija</strain>
    </source>
</reference>
<reference key="2">
    <citation type="journal article" date="1997" name="Biochem. J.">
        <title>Molecular cloning and characterization of the thiolesterase glyoxalase II from Arabidopsis thaliana.</title>
        <authorList>
            <person name="Ridderstroem M."/>
            <person name="Mannervik B."/>
        </authorList>
    </citation>
    <scope>NUCLEOTIDE SEQUENCE [MRNA]</scope>
    <source>
        <strain>cv. Columbia</strain>
        <tissue>Leaf</tissue>
    </source>
</reference>
<reference key="3">
    <citation type="journal article" date="2000" name="Nature">
        <title>Sequence and analysis of chromosome 3 of the plant Arabidopsis thaliana.</title>
        <authorList>
            <person name="Salanoubat M."/>
            <person name="Lemcke K."/>
            <person name="Rieger M."/>
            <person name="Ansorge W."/>
            <person name="Unseld M."/>
            <person name="Fartmann B."/>
            <person name="Valle G."/>
            <person name="Bloecker H."/>
            <person name="Perez-Alonso M."/>
            <person name="Obermaier B."/>
            <person name="Delseny M."/>
            <person name="Boutry M."/>
            <person name="Grivell L.A."/>
            <person name="Mache R."/>
            <person name="Puigdomenech P."/>
            <person name="De Simone V."/>
            <person name="Choisne N."/>
            <person name="Artiguenave F."/>
            <person name="Robert C."/>
            <person name="Brottier P."/>
            <person name="Wincker P."/>
            <person name="Cattolico L."/>
            <person name="Weissenbach J."/>
            <person name="Saurin W."/>
            <person name="Quetier F."/>
            <person name="Schaefer M."/>
            <person name="Mueller-Auer S."/>
            <person name="Gabel C."/>
            <person name="Fuchs M."/>
            <person name="Benes V."/>
            <person name="Wurmbach E."/>
            <person name="Drzonek H."/>
            <person name="Erfle H."/>
            <person name="Jordan N."/>
            <person name="Bangert S."/>
            <person name="Wiedelmann R."/>
            <person name="Kranz H."/>
            <person name="Voss H."/>
            <person name="Holland R."/>
            <person name="Brandt P."/>
            <person name="Nyakatura G."/>
            <person name="Vezzi A."/>
            <person name="D'Angelo M."/>
            <person name="Pallavicini A."/>
            <person name="Toppo S."/>
            <person name="Simionati B."/>
            <person name="Conrad A."/>
            <person name="Hornischer K."/>
            <person name="Kauer G."/>
            <person name="Loehnert T.-H."/>
            <person name="Nordsiek G."/>
            <person name="Reichelt J."/>
            <person name="Scharfe M."/>
            <person name="Schoen O."/>
            <person name="Bargues M."/>
            <person name="Terol J."/>
            <person name="Climent J."/>
            <person name="Navarro P."/>
            <person name="Collado C."/>
            <person name="Perez-Perez A."/>
            <person name="Ottenwaelder B."/>
            <person name="Duchemin D."/>
            <person name="Cooke R."/>
            <person name="Laudie M."/>
            <person name="Berger-Llauro C."/>
            <person name="Purnelle B."/>
            <person name="Masuy D."/>
            <person name="de Haan M."/>
            <person name="Maarse A.C."/>
            <person name="Alcaraz J.-P."/>
            <person name="Cottet A."/>
            <person name="Casacuberta E."/>
            <person name="Monfort A."/>
            <person name="Argiriou A."/>
            <person name="Flores M."/>
            <person name="Liguori R."/>
            <person name="Vitale D."/>
            <person name="Mannhaupt G."/>
            <person name="Haase D."/>
            <person name="Schoof H."/>
            <person name="Rudd S."/>
            <person name="Zaccaria P."/>
            <person name="Mewes H.-W."/>
            <person name="Mayer K.F.X."/>
            <person name="Kaul S."/>
            <person name="Town C.D."/>
            <person name="Koo H.L."/>
            <person name="Tallon L.J."/>
            <person name="Jenkins J."/>
            <person name="Rooney T."/>
            <person name="Rizzo M."/>
            <person name="Walts A."/>
            <person name="Utterback T."/>
            <person name="Fujii C.Y."/>
            <person name="Shea T.P."/>
            <person name="Creasy T.H."/>
            <person name="Haas B."/>
            <person name="Maiti R."/>
            <person name="Wu D."/>
            <person name="Peterson J."/>
            <person name="Van Aken S."/>
            <person name="Pai G."/>
            <person name="Militscher J."/>
            <person name="Sellers P."/>
            <person name="Gill J.E."/>
            <person name="Feldblyum T.V."/>
            <person name="Preuss D."/>
            <person name="Lin X."/>
            <person name="Nierman W.C."/>
            <person name="Salzberg S.L."/>
            <person name="White O."/>
            <person name="Venter J.C."/>
            <person name="Fraser C.M."/>
            <person name="Kaneko T."/>
            <person name="Nakamura Y."/>
            <person name="Sato S."/>
            <person name="Kato T."/>
            <person name="Asamizu E."/>
            <person name="Sasamoto S."/>
            <person name="Kimura T."/>
            <person name="Idesawa K."/>
            <person name="Kawashima K."/>
            <person name="Kishida Y."/>
            <person name="Kiyokawa C."/>
            <person name="Kohara M."/>
            <person name="Matsumoto M."/>
            <person name="Matsuno A."/>
            <person name="Muraki A."/>
            <person name="Nakayama S."/>
            <person name="Nakazaki N."/>
            <person name="Shinpo S."/>
            <person name="Takeuchi C."/>
            <person name="Wada T."/>
            <person name="Watanabe A."/>
            <person name="Yamada M."/>
            <person name="Yasuda M."/>
            <person name="Tabata S."/>
        </authorList>
    </citation>
    <scope>NUCLEOTIDE SEQUENCE [LARGE SCALE GENOMIC DNA]</scope>
    <source>
        <strain>cv. Columbia</strain>
    </source>
</reference>
<reference key="4">
    <citation type="journal article" date="2017" name="Plant J.">
        <title>Araport11: a complete reannotation of the Arabidopsis thaliana reference genome.</title>
        <authorList>
            <person name="Cheng C.Y."/>
            <person name="Krishnakumar V."/>
            <person name="Chan A.P."/>
            <person name="Thibaud-Nissen F."/>
            <person name="Schobel S."/>
            <person name="Town C.D."/>
        </authorList>
    </citation>
    <scope>GENOME REANNOTATION</scope>
    <source>
        <strain>cv. Columbia</strain>
    </source>
</reference>
<reference key="5">
    <citation type="journal article" date="2003" name="Science">
        <title>Empirical analysis of transcriptional activity in the Arabidopsis genome.</title>
        <authorList>
            <person name="Yamada K."/>
            <person name="Lim J."/>
            <person name="Dale J.M."/>
            <person name="Chen H."/>
            <person name="Shinn P."/>
            <person name="Palm C.J."/>
            <person name="Southwick A.M."/>
            <person name="Wu H.C."/>
            <person name="Kim C.J."/>
            <person name="Nguyen M."/>
            <person name="Pham P.K."/>
            <person name="Cheuk R.F."/>
            <person name="Karlin-Newmann G."/>
            <person name="Liu S.X."/>
            <person name="Lam B."/>
            <person name="Sakano H."/>
            <person name="Wu T."/>
            <person name="Yu G."/>
            <person name="Miranda M."/>
            <person name="Quach H.L."/>
            <person name="Tripp M."/>
            <person name="Chang C.H."/>
            <person name="Lee J.M."/>
            <person name="Toriumi M.J."/>
            <person name="Chan M.M."/>
            <person name="Tang C.C."/>
            <person name="Onodera C.S."/>
            <person name="Deng J.M."/>
            <person name="Akiyama K."/>
            <person name="Ansari Y."/>
            <person name="Arakawa T."/>
            <person name="Banh J."/>
            <person name="Banno F."/>
            <person name="Bowser L."/>
            <person name="Brooks S.Y."/>
            <person name="Carninci P."/>
            <person name="Chao Q."/>
            <person name="Choy N."/>
            <person name="Enju A."/>
            <person name="Goldsmith A.D."/>
            <person name="Gurjal M."/>
            <person name="Hansen N.F."/>
            <person name="Hayashizaki Y."/>
            <person name="Johnson-Hopson C."/>
            <person name="Hsuan V.W."/>
            <person name="Iida K."/>
            <person name="Karnes M."/>
            <person name="Khan S."/>
            <person name="Koesema E."/>
            <person name="Ishida J."/>
            <person name="Jiang P.X."/>
            <person name="Jones T."/>
            <person name="Kawai J."/>
            <person name="Kamiya A."/>
            <person name="Meyers C."/>
            <person name="Nakajima M."/>
            <person name="Narusaka M."/>
            <person name="Seki M."/>
            <person name="Sakurai T."/>
            <person name="Satou M."/>
            <person name="Tamse R."/>
            <person name="Vaysberg M."/>
            <person name="Wallender E.K."/>
            <person name="Wong C."/>
            <person name="Yamamura Y."/>
            <person name="Yuan S."/>
            <person name="Shinozaki K."/>
            <person name="Davis R.W."/>
            <person name="Theologis A."/>
            <person name="Ecker J.R."/>
        </authorList>
    </citation>
    <scope>NUCLEOTIDE SEQUENCE [LARGE SCALE MRNA]</scope>
    <source>
        <strain>cv. Columbia</strain>
    </source>
</reference>
<reference key="6">
    <citation type="journal article" date="2001" name="J. Biol. Chem.">
        <title>Arabidopsis glyoxalase II contains a zinc/iron binuclear metal center that is essential for substrate binding and catalysis.</title>
        <authorList>
            <person name="Zang T.M."/>
            <person name="Hollman D.A."/>
            <person name="Crawford P.A."/>
            <person name="Crowder M.W."/>
            <person name="Makaroff C.A."/>
        </authorList>
    </citation>
    <scope>MUTAGENESIS OF HIS-54; ASP-58; CYS-142; LYS-144; ASN-180; ARG-227 AND ARG-250</scope>
    <scope>CATALYTIC ACTIVITY</scope>
    <scope>FUNCTION</scope>
    <scope>COFACTOR</scope>
</reference>
<reference key="7">
    <citation type="journal article" date="2003" name="Biochemistry">
        <title>Flexible metal binding of the metallo-beta-lactamase domain: glyoxalase II incorporates iron, manganese, and zinc in vivo.</title>
        <authorList>
            <person name="Schilling O."/>
            <person name="Wenzel N."/>
            <person name="Naylor M."/>
            <person name="Vogel A."/>
            <person name="Crowder M.W."/>
            <person name="Makaroff C.A."/>
            <person name="Meyer-Klaucke W."/>
        </authorList>
    </citation>
    <scope>FUNCTION</scope>
    <scope>COFACTOR</scope>
    <scope>BIOPHYSICOCHEMICAL PROPERTIES</scope>
</reference>
<reference key="8">
    <citation type="journal article" date="2010" name="J. Biol. Inorg. Chem.">
        <title>The metal ion requirements of Arabidopsis thaliana Glx2-2 for catalytic activity.</title>
        <authorList>
            <person name="Limphong P."/>
            <person name="McKinney R.M."/>
            <person name="Adams N.E."/>
            <person name="Makaroff C.A."/>
            <person name="Bennett B."/>
            <person name="Crowder M.W."/>
        </authorList>
    </citation>
    <scope>FUNCTION</scope>
    <scope>CATALYTIC ACTIVITY</scope>
    <scope>COFACTOR</scope>
</reference>
<organism>
    <name type="scientific">Arabidopsis thaliana</name>
    <name type="common">Mouse-ear cress</name>
    <dbReference type="NCBI Taxonomy" id="3702"/>
    <lineage>
        <taxon>Eukaryota</taxon>
        <taxon>Viridiplantae</taxon>
        <taxon>Streptophyta</taxon>
        <taxon>Embryophyta</taxon>
        <taxon>Tracheophyta</taxon>
        <taxon>Spermatophyta</taxon>
        <taxon>Magnoliopsida</taxon>
        <taxon>eudicotyledons</taxon>
        <taxon>Gunneridae</taxon>
        <taxon>Pentapetalae</taxon>
        <taxon>rosids</taxon>
        <taxon>malvids</taxon>
        <taxon>Brassicales</taxon>
        <taxon>Brassicaceae</taxon>
        <taxon>Camelineae</taxon>
        <taxon>Arabidopsis</taxon>
    </lineage>
</organism>
<dbReference type="EC" id="3.1.2.6" evidence="2 4"/>
<dbReference type="EMBL" id="U90929">
    <property type="protein sequence ID" value="AAC49867.1"/>
    <property type="molecule type" value="mRNA"/>
</dbReference>
<dbReference type="EMBL" id="Y08357">
    <property type="protein sequence ID" value="CAA69644.1"/>
    <property type="molecule type" value="mRNA"/>
</dbReference>
<dbReference type="EMBL" id="AC011708">
    <property type="protein sequence ID" value="AAF19564.1"/>
    <property type="molecule type" value="Genomic_DNA"/>
</dbReference>
<dbReference type="EMBL" id="CP002686">
    <property type="protein sequence ID" value="AEE74963.1"/>
    <property type="molecule type" value="Genomic_DNA"/>
</dbReference>
<dbReference type="EMBL" id="AY052329">
    <property type="protein sequence ID" value="AAK96522.1"/>
    <property type="molecule type" value="mRNA"/>
</dbReference>
<dbReference type="EMBL" id="BT000849">
    <property type="protein sequence ID" value="AAN38686.1"/>
    <property type="molecule type" value="mRNA"/>
</dbReference>
<dbReference type="RefSeq" id="NP_187696.1">
    <property type="nucleotide sequence ID" value="NM_111922.4"/>
</dbReference>
<dbReference type="SMR" id="O24496"/>
<dbReference type="BioGRID" id="5589">
    <property type="interactions" value="3"/>
</dbReference>
<dbReference type="FunCoup" id="O24496">
    <property type="interactions" value="2630"/>
</dbReference>
<dbReference type="STRING" id="3702.O24496"/>
<dbReference type="iPTMnet" id="O24496"/>
<dbReference type="PaxDb" id="3702-AT3G10850.1"/>
<dbReference type="ProteomicsDB" id="248584"/>
<dbReference type="EnsemblPlants" id="AT3G10850.1">
    <property type="protein sequence ID" value="AT3G10850.1"/>
    <property type="gene ID" value="AT3G10850"/>
</dbReference>
<dbReference type="GeneID" id="820255"/>
<dbReference type="Gramene" id="AT3G10850.1">
    <property type="protein sequence ID" value="AT3G10850.1"/>
    <property type="gene ID" value="AT3G10850"/>
</dbReference>
<dbReference type="KEGG" id="ath:AT3G10850"/>
<dbReference type="Araport" id="AT3G10850"/>
<dbReference type="TAIR" id="AT3G10850">
    <property type="gene designation" value="GLY2"/>
</dbReference>
<dbReference type="eggNOG" id="KOG0813">
    <property type="taxonomic scope" value="Eukaryota"/>
</dbReference>
<dbReference type="HOGENOM" id="CLU_030571_4_0_1"/>
<dbReference type="InParanoid" id="O24496"/>
<dbReference type="OMA" id="NYIWLLQ"/>
<dbReference type="PhylomeDB" id="O24496"/>
<dbReference type="BRENDA" id="3.1.2.6">
    <property type="organism ID" value="399"/>
</dbReference>
<dbReference type="SABIO-RK" id="O24496"/>
<dbReference type="UniPathway" id="UPA00619">
    <property type="reaction ID" value="UER00676"/>
</dbReference>
<dbReference type="CD-CODE" id="4299E36E">
    <property type="entry name" value="Nucleolus"/>
</dbReference>
<dbReference type="PRO" id="PR:O24496"/>
<dbReference type="Proteomes" id="UP000006548">
    <property type="component" value="Chromosome 3"/>
</dbReference>
<dbReference type="ExpressionAtlas" id="O24496">
    <property type="expression patterns" value="baseline and differential"/>
</dbReference>
<dbReference type="GO" id="GO:0005829">
    <property type="term" value="C:cytosol"/>
    <property type="evidence" value="ECO:0007005"/>
    <property type="project" value="TAIR"/>
</dbReference>
<dbReference type="GO" id="GO:0099503">
    <property type="term" value="C:secretory vesicle"/>
    <property type="evidence" value="ECO:0007005"/>
    <property type="project" value="TAIR"/>
</dbReference>
<dbReference type="GO" id="GO:0004416">
    <property type="term" value="F:hydroxyacylglutathione hydrolase activity"/>
    <property type="evidence" value="ECO:0007669"/>
    <property type="project" value="UniProtKB-EC"/>
</dbReference>
<dbReference type="GO" id="GO:0046872">
    <property type="term" value="F:metal ion binding"/>
    <property type="evidence" value="ECO:0007669"/>
    <property type="project" value="UniProtKB-KW"/>
</dbReference>
<dbReference type="GO" id="GO:0019243">
    <property type="term" value="P:methylglyoxal catabolic process to D-lactate via S-lactoyl-glutathione"/>
    <property type="evidence" value="ECO:0007669"/>
    <property type="project" value="InterPro"/>
</dbReference>
<dbReference type="CDD" id="cd07723">
    <property type="entry name" value="hydroxyacylglutathione_hydrolase_MBL-fold"/>
    <property type="match status" value="1"/>
</dbReference>
<dbReference type="FunFam" id="3.60.15.10:FF:000019">
    <property type="entry name" value="Hydroxyacylglutathione hydrolase, mitochondrial"/>
    <property type="match status" value="1"/>
</dbReference>
<dbReference type="Gene3D" id="3.60.15.10">
    <property type="entry name" value="Ribonuclease Z/Hydroxyacylglutathione hydrolase-like"/>
    <property type="match status" value="1"/>
</dbReference>
<dbReference type="HAMAP" id="MF_01374">
    <property type="entry name" value="Glyoxalase_2"/>
    <property type="match status" value="1"/>
</dbReference>
<dbReference type="InterPro" id="IPR035680">
    <property type="entry name" value="Clx_II_MBL"/>
</dbReference>
<dbReference type="InterPro" id="IPR032282">
    <property type="entry name" value="HAGH_C"/>
</dbReference>
<dbReference type="InterPro" id="IPR017782">
    <property type="entry name" value="Hydroxyacylglutathione_Hdrlase"/>
</dbReference>
<dbReference type="InterPro" id="IPR001279">
    <property type="entry name" value="Metallo-B-lactamas"/>
</dbReference>
<dbReference type="InterPro" id="IPR036866">
    <property type="entry name" value="RibonucZ/Hydroxyglut_hydro"/>
</dbReference>
<dbReference type="NCBIfam" id="TIGR03413">
    <property type="entry name" value="GSH_gloB"/>
    <property type="match status" value="1"/>
</dbReference>
<dbReference type="PANTHER" id="PTHR11935">
    <property type="entry name" value="BETA LACTAMASE DOMAIN"/>
    <property type="match status" value="1"/>
</dbReference>
<dbReference type="PANTHER" id="PTHR11935:SF94">
    <property type="entry name" value="TENZING NORGAY, ISOFORM C"/>
    <property type="match status" value="1"/>
</dbReference>
<dbReference type="Pfam" id="PF16123">
    <property type="entry name" value="HAGH_C"/>
    <property type="match status" value="1"/>
</dbReference>
<dbReference type="Pfam" id="PF00753">
    <property type="entry name" value="Lactamase_B"/>
    <property type="match status" value="1"/>
</dbReference>
<dbReference type="PIRSF" id="PIRSF005457">
    <property type="entry name" value="Glx"/>
    <property type="match status" value="1"/>
</dbReference>
<dbReference type="SMART" id="SM00849">
    <property type="entry name" value="Lactamase_B"/>
    <property type="match status" value="1"/>
</dbReference>
<dbReference type="SUPFAM" id="SSF56281">
    <property type="entry name" value="Metallo-hydrolase/oxidoreductase"/>
    <property type="match status" value="1"/>
</dbReference>
<keyword id="KW-0963">Cytoplasm</keyword>
<keyword id="KW-0378">Hydrolase</keyword>
<keyword id="KW-0408">Iron</keyword>
<keyword id="KW-0479">Metal-binding</keyword>
<keyword id="KW-1185">Reference proteome</keyword>
<keyword id="KW-0862">Zinc</keyword>
<name>GLO2C_ARATH</name>